<evidence type="ECO:0000255" key="1">
    <source>
        <dbReference type="HAMAP-Rule" id="MF_00435"/>
    </source>
</evidence>
<evidence type="ECO:0000255" key="2">
    <source>
        <dbReference type="PROSITE-ProRule" id="PRU01197"/>
    </source>
</evidence>
<evidence type="ECO:0000255" key="3">
    <source>
        <dbReference type="PROSITE-ProRule" id="PRU01198"/>
    </source>
</evidence>
<reference key="1">
    <citation type="journal article" date="2010" name="Proc. Natl. Acad. Sci. U.S.A.">
        <title>Nitrosopumilus maritimus genome reveals unique mechanisms for nitrification and autotrophy in globally distributed marine crenarchaea.</title>
        <authorList>
            <person name="Walker C.B."/>
            <person name="de la Torre J.R."/>
            <person name="Klotz M.G."/>
            <person name="Urakawa H."/>
            <person name="Pinel N."/>
            <person name="Arp D.J."/>
            <person name="Brochier-Armanet C."/>
            <person name="Chain P.S."/>
            <person name="Chan P.P."/>
            <person name="Gollabgir A."/>
            <person name="Hemp J."/>
            <person name="Hugler M."/>
            <person name="Karr E.A."/>
            <person name="Konneke M."/>
            <person name="Shin M."/>
            <person name="Lawton T.J."/>
            <person name="Lowe T."/>
            <person name="Martens-Habbena W."/>
            <person name="Sayavedra-Soto L.A."/>
            <person name="Lang D."/>
            <person name="Sievert S.M."/>
            <person name="Rosenzweig A.C."/>
            <person name="Manning G."/>
            <person name="Stahl D.A."/>
        </authorList>
    </citation>
    <scope>NUCLEOTIDE SEQUENCE [LARGE SCALE GENOMIC DNA]</scope>
    <source>
        <strain>SCM1</strain>
    </source>
</reference>
<name>ILVC_NITMS</name>
<dbReference type="EC" id="1.1.1.86" evidence="1"/>
<dbReference type="EMBL" id="CP000866">
    <property type="protein sequence ID" value="ABX12855.1"/>
    <property type="molecule type" value="Genomic_DNA"/>
</dbReference>
<dbReference type="RefSeq" id="WP_012215342.1">
    <property type="nucleotide sequence ID" value="NC_010085.1"/>
</dbReference>
<dbReference type="SMR" id="A9A2E4"/>
<dbReference type="FunCoup" id="A9A2E4">
    <property type="interactions" value="140"/>
</dbReference>
<dbReference type="STRING" id="436308.Nmar_0959"/>
<dbReference type="EnsemblBacteria" id="ABX12855">
    <property type="protein sequence ID" value="ABX12855"/>
    <property type="gene ID" value="Nmar_0959"/>
</dbReference>
<dbReference type="GeneID" id="40722588"/>
<dbReference type="KEGG" id="nmr:Nmar_0959"/>
<dbReference type="eggNOG" id="arCOG04465">
    <property type="taxonomic scope" value="Archaea"/>
</dbReference>
<dbReference type="HOGENOM" id="CLU_033821_0_1_2"/>
<dbReference type="InParanoid" id="A9A2E4"/>
<dbReference type="OrthoDB" id="6064at2157"/>
<dbReference type="PhylomeDB" id="A9A2E4"/>
<dbReference type="UniPathway" id="UPA00047">
    <property type="reaction ID" value="UER00056"/>
</dbReference>
<dbReference type="UniPathway" id="UPA00049">
    <property type="reaction ID" value="UER00060"/>
</dbReference>
<dbReference type="Proteomes" id="UP000000792">
    <property type="component" value="Chromosome"/>
</dbReference>
<dbReference type="GO" id="GO:0004455">
    <property type="term" value="F:ketol-acid reductoisomerase activity"/>
    <property type="evidence" value="ECO:0000318"/>
    <property type="project" value="GO_Central"/>
</dbReference>
<dbReference type="GO" id="GO:0000287">
    <property type="term" value="F:magnesium ion binding"/>
    <property type="evidence" value="ECO:0007669"/>
    <property type="project" value="UniProtKB-UniRule"/>
</dbReference>
<dbReference type="GO" id="GO:0050661">
    <property type="term" value="F:NADP binding"/>
    <property type="evidence" value="ECO:0007669"/>
    <property type="project" value="InterPro"/>
</dbReference>
<dbReference type="GO" id="GO:0009097">
    <property type="term" value="P:isoleucine biosynthetic process"/>
    <property type="evidence" value="ECO:0000318"/>
    <property type="project" value="GO_Central"/>
</dbReference>
<dbReference type="GO" id="GO:0009099">
    <property type="term" value="P:L-valine biosynthetic process"/>
    <property type="evidence" value="ECO:0000318"/>
    <property type="project" value="GO_Central"/>
</dbReference>
<dbReference type="FunFam" id="3.40.50.720:FF:000023">
    <property type="entry name" value="Ketol-acid reductoisomerase (NADP(+))"/>
    <property type="match status" value="1"/>
</dbReference>
<dbReference type="Gene3D" id="6.10.240.10">
    <property type="match status" value="1"/>
</dbReference>
<dbReference type="Gene3D" id="3.40.50.720">
    <property type="entry name" value="NAD(P)-binding Rossmann-like Domain"/>
    <property type="match status" value="1"/>
</dbReference>
<dbReference type="HAMAP" id="MF_00435">
    <property type="entry name" value="IlvC"/>
    <property type="match status" value="1"/>
</dbReference>
<dbReference type="InterPro" id="IPR008927">
    <property type="entry name" value="6-PGluconate_DH-like_C_sf"/>
</dbReference>
<dbReference type="InterPro" id="IPR013023">
    <property type="entry name" value="KARI"/>
</dbReference>
<dbReference type="InterPro" id="IPR000506">
    <property type="entry name" value="KARI_C"/>
</dbReference>
<dbReference type="InterPro" id="IPR013116">
    <property type="entry name" value="KARI_N"/>
</dbReference>
<dbReference type="InterPro" id="IPR014359">
    <property type="entry name" value="KARI_prok"/>
</dbReference>
<dbReference type="InterPro" id="IPR036291">
    <property type="entry name" value="NAD(P)-bd_dom_sf"/>
</dbReference>
<dbReference type="NCBIfam" id="TIGR00465">
    <property type="entry name" value="ilvC"/>
    <property type="match status" value="1"/>
</dbReference>
<dbReference type="NCBIfam" id="NF004017">
    <property type="entry name" value="PRK05479.1"/>
    <property type="match status" value="1"/>
</dbReference>
<dbReference type="PANTHER" id="PTHR21371">
    <property type="entry name" value="KETOL-ACID REDUCTOISOMERASE, MITOCHONDRIAL"/>
    <property type="match status" value="1"/>
</dbReference>
<dbReference type="PANTHER" id="PTHR21371:SF1">
    <property type="entry name" value="KETOL-ACID REDUCTOISOMERASE, MITOCHONDRIAL"/>
    <property type="match status" value="1"/>
</dbReference>
<dbReference type="Pfam" id="PF01450">
    <property type="entry name" value="KARI_C"/>
    <property type="match status" value="1"/>
</dbReference>
<dbReference type="Pfam" id="PF07991">
    <property type="entry name" value="KARI_N"/>
    <property type="match status" value="1"/>
</dbReference>
<dbReference type="PIRSF" id="PIRSF000116">
    <property type="entry name" value="IlvC_gammaproteo"/>
    <property type="match status" value="1"/>
</dbReference>
<dbReference type="SUPFAM" id="SSF48179">
    <property type="entry name" value="6-phosphogluconate dehydrogenase C-terminal domain-like"/>
    <property type="match status" value="1"/>
</dbReference>
<dbReference type="SUPFAM" id="SSF51735">
    <property type="entry name" value="NAD(P)-binding Rossmann-fold domains"/>
    <property type="match status" value="1"/>
</dbReference>
<dbReference type="PROSITE" id="PS51851">
    <property type="entry name" value="KARI_C"/>
    <property type="match status" value="1"/>
</dbReference>
<dbReference type="PROSITE" id="PS51850">
    <property type="entry name" value="KARI_N"/>
    <property type="match status" value="1"/>
</dbReference>
<organism>
    <name type="scientific">Nitrosopumilus maritimus (strain SCM1)</name>
    <dbReference type="NCBI Taxonomy" id="436308"/>
    <lineage>
        <taxon>Archaea</taxon>
        <taxon>Nitrososphaerota</taxon>
        <taxon>Nitrososphaeria</taxon>
        <taxon>Nitrosopumilales</taxon>
        <taxon>Nitrosopumilaceae</taxon>
        <taxon>Nitrosopumilus</taxon>
    </lineage>
</organism>
<accession>A9A2E4</accession>
<proteinExistence type="inferred from homology"/>
<sequence>MAQTWKDTDISLDPIKDQTIAVIGYGIQGDAQANNMKDSGLNVIIGLKEGGNSWKKAEADGHKVMSVADATKQADIIHILIPDMIQGQVYKDEIGPNLSEGKALSFSHAAAIYWKWIEAPNNVDLIMIAPKGPGSKVRETYLDNFGTPAIVAVEQDFTGKAWDRTLGIAKAIGSARAGLIKTAFKEEVETDWFGEQADLCGGAASMVTNAFETLVEAGYQPEIAYFEVLHELKLIVDMIQRYGINGMWRRVSETARYGGLTRGPMVMDSANKENMKKVLTMIQDGTFNNEWISEYQKNGKDAFDKYMKQYDEHQIEKVGKEMRKMMWPDSTE</sequence>
<gene>
    <name evidence="1" type="primary">ilvC</name>
    <name type="ordered locus">Nmar_0959</name>
</gene>
<comment type="function">
    <text evidence="1">Involved in the biosynthesis of branched-chain amino acids (BCAA). Catalyzes an alkyl-migration followed by a ketol-acid reduction of (S)-2-acetolactate (S2AL) to yield (R)-2,3-dihydroxy-isovalerate. In the isomerase reaction, S2AL is rearranged via a Mg-dependent methyl migration to produce 3-hydroxy-3-methyl-2-ketobutyrate (HMKB). In the reductase reaction, this 2-ketoacid undergoes a metal-dependent reduction by NADPH to yield (R)-2,3-dihydroxy-isovalerate.</text>
</comment>
<comment type="catalytic activity">
    <reaction evidence="1">
        <text>(2R)-2,3-dihydroxy-3-methylbutanoate + NADP(+) = (2S)-2-acetolactate + NADPH + H(+)</text>
        <dbReference type="Rhea" id="RHEA:22068"/>
        <dbReference type="ChEBI" id="CHEBI:15378"/>
        <dbReference type="ChEBI" id="CHEBI:49072"/>
        <dbReference type="ChEBI" id="CHEBI:57783"/>
        <dbReference type="ChEBI" id="CHEBI:58349"/>
        <dbReference type="ChEBI" id="CHEBI:58476"/>
        <dbReference type="EC" id="1.1.1.86"/>
    </reaction>
</comment>
<comment type="catalytic activity">
    <reaction evidence="1">
        <text>(2R,3R)-2,3-dihydroxy-3-methylpentanoate + NADP(+) = (S)-2-ethyl-2-hydroxy-3-oxobutanoate + NADPH + H(+)</text>
        <dbReference type="Rhea" id="RHEA:13493"/>
        <dbReference type="ChEBI" id="CHEBI:15378"/>
        <dbReference type="ChEBI" id="CHEBI:49256"/>
        <dbReference type="ChEBI" id="CHEBI:49258"/>
        <dbReference type="ChEBI" id="CHEBI:57783"/>
        <dbReference type="ChEBI" id="CHEBI:58349"/>
        <dbReference type="EC" id="1.1.1.86"/>
    </reaction>
</comment>
<comment type="cofactor">
    <cofactor evidence="1">
        <name>Mg(2+)</name>
        <dbReference type="ChEBI" id="CHEBI:18420"/>
    </cofactor>
    <text evidence="1">Binds 2 magnesium ions per subunit.</text>
</comment>
<comment type="pathway">
    <text evidence="1">Amino-acid biosynthesis; L-isoleucine biosynthesis; L-isoleucine from 2-oxobutanoate: step 2/4.</text>
</comment>
<comment type="pathway">
    <text evidence="1">Amino-acid biosynthesis; L-valine biosynthesis; L-valine from pyruvate: step 2/4.</text>
</comment>
<comment type="similarity">
    <text evidence="1">Belongs to the ketol-acid reductoisomerase family.</text>
</comment>
<keyword id="KW-0028">Amino-acid biosynthesis</keyword>
<keyword id="KW-0100">Branched-chain amino acid biosynthesis</keyword>
<keyword id="KW-0460">Magnesium</keyword>
<keyword id="KW-0479">Metal-binding</keyword>
<keyword id="KW-0521">NADP</keyword>
<keyword id="KW-0560">Oxidoreductase</keyword>
<keyword id="KW-1185">Reference proteome</keyword>
<feature type="chain" id="PRO_1000124313" description="Ketol-acid reductoisomerase (NADP(+))">
    <location>
        <begin position="1"/>
        <end position="332"/>
    </location>
</feature>
<feature type="domain" description="KARI N-terminal Rossmann" evidence="2">
    <location>
        <begin position="1"/>
        <end position="182"/>
    </location>
</feature>
<feature type="domain" description="KARI C-terminal knotted" evidence="3">
    <location>
        <begin position="183"/>
        <end position="329"/>
    </location>
</feature>
<feature type="active site" evidence="1">
    <location>
        <position position="108"/>
    </location>
</feature>
<feature type="binding site" evidence="1">
    <location>
        <begin position="25"/>
        <end position="28"/>
    </location>
    <ligand>
        <name>NADP(+)</name>
        <dbReference type="ChEBI" id="CHEBI:58349"/>
    </ligand>
</feature>
<feature type="binding site" evidence="1">
    <location>
        <position position="48"/>
    </location>
    <ligand>
        <name>NADP(+)</name>
        <dbReference type="ChEBI" id="CHEBI:58349"/>
    </ligand>
</feature>
<feature type="binding site" evidence="1">
    <location>
        <position position="53"/>
    </location>
    <ligand>
        <name>NADP(+)</name>
        <dbReference type="ChEBI" id="CHEBI:58349"/>
    </ligand>
</feature>
<feature type="binding site" evidence="1">
    <location>
        <begin position="83"/>
        <end position="86"/>
    </location>
    <ligand>
        <name>NADP(+)</name>
        <dbReference type="ChEBI" id="CHEBI:58349"/>
    </ligand>
</feature>
<feature type="binding site" evidence="1">
    <location>
        <position position="134"/>
    </location>
    <ligand>
        <name>NADP(+)</name>
        <dbReference type="ChEBI" id="CHEBI:58349"/>
    </ligand>
</feature>
<feature type="binding site" evidence="1">
    <location>
        <position position="191"/>
    </location>
    <ligand>
        <name>Mg(2+)</name>
        <dbReference type="ChEBI" id="CHEBI:18420"/>
        <label>1</label>
    </ligand>
</feature>
<feature type="binding site" evidence="1">
    <location>
        <position position="191"/>
    </location>
    <ligand>
        <name>Mg(2+)</name>
        <dbReference type="ChEBI" id="CHEBI:18420"/>
        <label>2</label>
    </ligand>
</feature>
<feature type="binding site" evidence="1">
    <location>
        <position position="195"/>
    </location>
    <ligand>
        <name>Mg(2+)</name>
        <dbReference type="ChEBI" id="CHEBI:18420"/>
        <label>1</label>
    </ligand>
</feature>
<feature type="binding site" evidence="1">
    <location>
        <position position="227"/>
    </location>
    <ligand>
        <name>Mg(2+)</name>
        <dbReference type="ChEBI" id="CHEBI:18420"/>
        <label>2</label>
    </ligand>
</feature>
<feature type="binding site" evidence="1">
    <location>
        <position position="231"/>
    </location>
    <ligand>
        <name>Mg(2+)</name>
        <dbReference type="ChEBI" id="CHEBI:18420"/>
        <label>2</label>
    </ligand>
</feature>
<feature type="binding site" evidence="1">
    <location>
        <position position="252"/>
    </location>
    <ligand>
        <name>substrate</name>
    </ligand>
</feature>
<protein>
    <recommendedName>
        <fullName evidence="1">Ketol-acid reductoisomerase (NADP(+))</fullName>
        <shortName evidence="1">KARI</shortName>
        <ecNumber evidence="1">1.1.1.86</ecNumber>
    </recommendedName>
    <alternativeName>
        <fullName evidence="1">Acetohydroxy-acid isomeroreductase</fullName>
        <shortName evidence="1">AHIR</shortName>
    </alternativeName>
    <alternativeName>
        <fullName evidence="1">Alpha-keto-beta-hydroxylacyl reductoisomerase</fullName>
    </alternativeName>
    <alternativeName>
        <fullName evidence="1">Ketol-acid reductoisomerase type 1</fullName>
    </alternativeName>
    <alternativeName>
        <fullName evidence="1">Ketol-acid reductoisomerase type I</fullName>
    </alternativeName>
</protein>